<feature type="peptide" id="PRO_0000441376" description="Cyclotide mang-A" evidence="2">
    <location>
        <begin position="1"/>
        <end position="29"/>
    </location>
</feature>
<feature type="disulfide bond" evidence="1">
    <location>
        <begin position="5"/>
        <end position="19"/>
    </location>
</feature>
<feature type="disulfide bond" evidence="1">
    <location>
        <begin position="9"/>
        <end position="21"/>
    </location>
</feature>
<feature type="disulfide bond" evidence="1">
    <location>
        <begin position="14"/>
        <end position="26"/>
    </location>
</feature>
<feature type="cross-link" description="Cyclopeptide (Gly-Asp)" evidence="3">
    <location>
        <begin position="1"/>
        <end position="29"/>
    </location>
</feature>
<sequence>GFPTCGETCTLGTCNTPGCTCSWPICTRD</sequence>
<keyword id="KW-0903">Direct protein sequencing</keyword>
<keyword id="KW-1015">Disulfide bond</keyword>
<keyword id="KW-0611">Plant defense</keyword>
<organism evidence="3">
    <name type="scientific">Melicytus angustifolius</name>
    <name type="common">Hymenanthera angustifolia</name>
    <dbReference type="NCBI Taxonomy" id="491104"/>
    <lineage>
        <taxon>Eukaryota</taxon>
        <taxon>Viridiplantae</taxon>
        <taxon>Streptophyta</taxon>
        <taxon>Embryophyta</taxon>
        <taxon>Tracheophyta</taxon>
        <taxon>Spermatophyta</taxon>
        <taxon>Magnoliopsida</taxon>
        <taxon>eudicotyledons</taxon>
        <taxon>Gunneridae</taxon>
        <taxon>Pentapetalae</taxon>
        <taxon>rosids</taxon>
        <taxon>fabids</taxon>
        <taxon>Malpighiales</taxon>
        <taxon>Violaceae</taxon>
        <taxon>Melicytus</taxon>
    </lineage>
</organism>
<evidence type="ECO:0000255" key="1">
    <source>
        <dbReference type="PROSITE-ProRule" id="PRU00395"/>
    </source>
</evidence>
<evidence type="ECO:0000269" key="2">
    <source>
    </source>
</evidence>
<evidence type="ECO:0000303" key="3">
    <source>
    </source>
</evidence>
<evidence type="ECO:0000305" key="4"/>
<comment type="function">
    <text evidence="1">Probably participates in a plant defense mechanism.</text>
</comment>
<comment type="domain">
    <text evidence="4">The presence of a 'disulfide through disulfide knot' structurally defines this protein as a knottin.</text>
</comment>
<comment type="PTM">
    <text evidence="1">This is a cyclic peptide.</text>
</comment>
<comment type="similarity">
    <text evidence="1">Belongs to the cyclotide family. Moebius subfamily.</text>
</comment>
<comment type="caution">
    <text evidence="1">This peptide is cyclic. The start position was chosen by similarity to Oak1 (kalata B1) for which the DNA sequence is known.</text>
</comment>
<dbReference type="SMR" id="C0HKI3"/>
<dbReference type="GO" id="GO:0006952">
    <property type="term" value="P:defense response"/>
    <property type="evidence" value="ECO:0007669"/>
    <property type="project" value="UniProtKB-KW"/>
</dbReference>
<dbReference type="InterPro" id="IPR005535">
    <property type="entry name" value="Cyclotide"/>
</dbReference>
<dbReference type="InterPro" id="IPR012324">
    <property type="entry name" value="Cyclotide_moebius_CS"/>
</dbReference>
<dbReference type="InterPro" id="IPR036146">
    <property type="entry name" value="Cyclotide_sf"/>
</dbReference>
<dbReference type="Pfam" id="PF03784">
    <property type="entry name" value="Cyclotide"/>
    <property type="match status" value="1"/>
</dbReference>
<dbReference type="SUPFAM" id="SSF57038">
    <property type="entry name" value="Cyclotides"/>
    <property type="match status" value="1"/>
</dbReference>
<dbReference type="PROSITE" id="PS51052">
    <property type="entry name" value="CYCLOTIDE"/>
    <property type="match status" value="1"/>
</dbReference>
<dbReference type="PROSITE" id="PS60009">
    <property type="entry name" value="CYCLOTIDE_MOEBIUS"/>
    <property type="match status" value="1"/>
</dbReference>
<proteinExistence type="evidence at protein level"/>
<protein>
    <recommendedName>
        <fullName evidence="3">Cyclotide mang-A</fullName>
    </recommendedName>
</protein>
<accession>C0HKI3</accession>
<name>CYMNA_MELAG</name>
<reference evidence="4" key="1">
    <citation type="journal article" date="2017" name="J. Nat. Prod.">
        <title>Understanding the Diversity and Distribution of Cyclotides from Plants of Varied Genetic Origin.</title>
        <authorList>
            <person name="Ravipati A.S."/>
            <person name="Poth A.G."/>
            <person name="Troeira Henriques S."/>
            <person name="Bhandari M."/>
            <person name="Huang Y.H."/>
            <person name="Nino J."/>
            <person name="Colgrave M.L."/>
            <person name="Craik D.J."/>
        </authorList>
    </citation>
    <scope>PROTEIN SEQUENCE</scope>
</reference>